<proteinExistence type="inferred from homology"/>
<keyword id="KW-1003">Cell membrane</keyword>
<keyword id="KW-0472">Membrane</keyword>
<keyword id="KW-1185">Reference proteome</keyword>
<keyword id="KW-0808">Transferase</keyword>
<keyword id="KW-0812">Transmembrane</keyword>
<keyword id="KW-1133">Transmembrane helix</keyword>
<dbReference type="EC" id="2.5.1.145" evidence="1"/>
<dbReference type="EMBL" id="AP006627">
    <property type="protein sequence ID" value="BAD65588.1"/>
    <property type="molecule type" value="Genomic_DNA"/>
</dbReference>
<dbReference type="RefSeq" id="WP_011247896.1">
    <property type="nucleotide sequence ID" value="NC_006582.1"/>
</dbReference>
<dbReference type="SMR" id="Q5WDH2"/>
<dbReference type="STRING" id="66692.ABC3054"/>
<dbReference type="KEGG" id="bcl:ABC3054"/>
<dbReference type="eggNOG" id="COG0682">
    <property type="taxonomic scope" value="Bacteria"/>
</dbReference>
<dbReference type="HOGENOM" id="CLU_013386_0_1_9"/>
<dbReference type="OrthoDB" id="871140at2"/>
<dbReference type="UniPathway" id="UPA00664"/>
<dbReference type="Proteomes" id="UP000001168">
    <property type="component" value="Chromosome"/>
</dbReference>
<dbReference type="GO" id="GO:0005886">
    <property type="term" value="C:plasma membrane"/>
    <property type="evidence" value="ECO:0007669"/>
    <property type="project" value="UniProtKB-SubCell"/>
</dbReference>
<dbReference type="GO" id="GO:0008961">
    <property type="term" value="F:phosphatidylglycerol-prolipoprotein diacylglyceryl transferase activity"/>
    <property type="evidence" value="ECO:0007669"/>
    <property type="project" value="UniProtKB-UniRule"/>
</dbReference>
<dbReference type="GO" id="GO:0042158">
    <property type="term" value="P:lipoprotein biosynthetic process"/>
    <property type="evidence" value="ECO:0007669"/>
    <property type="project" value="UniProtKB-UniRule"/>
</dbReference>
<dbReference type="HAMAP" id="MF_01147">
    <property type="entry name" value="Lgt"/>
    <property type="match status" value="1"/>
</dbReference>
<dbReference type="InterPro" id="IPR001640">
    <property type="entry name" value="Lgt"/>
</dbReference>
<dbReference type="NCBIfam" id="TIGR00544">
    <property type="entry name" value="lgt"/>
    <property type="match status" value="1"/>
</dbReference>
<dbReference type="PANTHER" id="PTHR30589:SF0">
    <property type="entry name" value="PHOSPHATIDYLGLYCEROL--PROLIPOPROTEIN DIACYLGLYCERYL TRANSFERASE"/>
    <property type="match status" value="1"/>
</dbReference>
<dbReference type="PANTHER" id="PTHR30589">
    <property type="entry name" value="PROLIPOPROTEIN DIACYLGLYCERYL TRANSFERASE"/>
    <property type="match status" value="1"/>
</dbReference>
<dbReference type="Pfam" id="PF01790">
    <property type="entry name" value="LGT"/>
    <property type="match status" value="1"/>
</dbReference>
<dbReference type="PROSITE" id="PS01311">
    <property type="entry name" value="LGT"/>
    <property type="match status" value="1"/>
</dbReference>
<organism>
    <name type="scientific">Shouchella clausii (strain KSM-K16)</name>
    <name type="common">Alkalihalobacillus clausii</name>
    <dbReference type="NCBI Taxonomy" id="66692"/>
    <lineage>
        <taxon>Bacteria</taxon>
        <taxon>Bacillati</taxon>
        <taxon>Bacillota</taxon>
        <taxon>Bacilli</taxon>
        <taxon>Bacillales</taxon>
        <taxon>Bacillaceae</taxon>
        <taxon>Shouchella</taxon>
    </lineage>
</organism>
<sequence length="277" mass="31690">MEEQIEPIDRVFVQLGPIAIYWYAVLILLGVAVGYFMARRESVKRGLPQETFADLLVWALPISILSARAYYVIFRWEQFADNPISVFYLREGGIAIHGALIGAVVTAIVFAKKRGLSFWKLADVAAPSILIGQAIGRWGNFVNQEVYGAEVTREFLEGMFLPDWIINQMYINGTYYQPTFLYESLWNVLGVVVLLLLRKANLRQGELFLSYVIWYSVGRFVIEGMRLDYLLIGDSLRTAQLLSIILVVAAIALWVYRRLWVKPPRYLNPDAATKQRK</sequence>
<feature type="chain" id="PRO_0000172555" description="Phosphatidylglycerol--prolipoprotein diacylglyceryl transferase">
    <location>
        <begin position="1"/>
        <end position="277"/>
    </location>
</feature>
<feature type="transmembrane region" description="Helical" evidence="1">
    <location>
        <begin position="18"/>
        <end position="38"/>
    </location>
</feature>
<feature type="transmembrane region" description="Helical" evidence="1">
    <location>
        <begin position="54"/>
        <end position="74"/>
    </location>
</feature>
<feature type="transmembrane region" description="Helical" evidence="1">
    <location>
        <begin position="91"/>
        <end position="111"/>
    </location>
</feature>
<feature type="transmembrane region" description="Helical" evidence="1">
    <location>
        <begin position="115"/>
        <end position="135"/>
    </location>
</feature>
<feature type="transmembrane region" description="Helical" evidence="1">
    <location>
        <begin position="177"/>
        <end position="197"/>
    </location>
</feature>
<feature type="transmembrane region" description="Helical" evidence="1">
    <location>
        <begin position="205"/>
        <end position="225"/>
    </location>
</feature>
<feature type="transmembrane region" description="Helical" evidence="1">
    <location>
        <begin position="236"/>
        <end position="256"/>
    </location>
</feature>
<feature type="binding site" evidence="1">
    <location>
        <position position="137"/>
    </location>
    <ligand>
        <name>a 1,2-diacyl-sn-glycero-3-phospho-(1'-sn-glycerol)</name>
        <dbReference type="ChEBI" id="CHEBI:64716"/>
    </ligand>
</feature>
<evidence type="ECO:0000255" key="1">
    <source>
        <dbReference type="HAMAP-Rule" id="MF_01147"/>
    </source>
</evidence>
<comment type="function">
    <text evidence="1">Catalyzes the transfer of the diacylglyceryl group from phosphatidylglycerol to the sulfhydryl group of the N-terminal cysteine of a prolipoprotein, the first step in the formation of mature lipoproteins.</text>
</comment>
<comment type="catalytic activity">
    <reaction evidence="1">
        <text>L-cysteinyl-[prolipoprotein] + a 1,2-diacyl-sn-glycero-3-phospho-(1'-sn-glycerol) = an S-1,2-diacyl-sn-glyceryl-L-cysteinyl-[prolipoprotein] + sn-glycerol 1-phosphate + H(+)</text>
        <dbReference type="Rhea" id="RHEA:56712"/>
        <dbReference type="Rhea" id="RHEA-COMP:14679"/>
        <dbReference type="Rhea" id="RHEA-COMP:14680"/>
        <dbReference type="ChEBI" id="CHEBI:15378"/>
        <dbReference type="ChEBI" id="CHEBI:29950"/>
        <dbReference type="ChEBI" id="CHEBI:57685"/>
        <dbReference type="ChEBI" id="CHEBI:64716"/>
        <dbReference type="ChEBI" id="CHEBI:140658"/>
        <dbReference type="EC" id="2.5.1.145"/>
    </reaction>
</comment>
<comment type="pathway">
    <text evidence="1">Protein modification; lipoprotein biosynthesis (diacylglyceryl transfer).</text>
</comment>
<comment type="subcellular location">
    <subcellularLocation>
        <location evidence="1">Cell membrane</location>
        <topology evidence="1">Multi-pass membrane protein</topology>
    </subcellularLocation>
</comment>
<comment type="similarity">
    <text evidence="1">Belongs to the Lgt family.</text>
</comment>
<gene>
    <name evidence="1" type="primary">lgt</name>
    <name type="ordered locus">ABC3054</name>
</gene>
<protein>
    <recommendedName>
        <fullName evidence="1">Phosphatidylglycerol--prolipoprotein diacylglyceryl transferase</fullName>
        <ecNumber evidence="1">2.5.1.145</ecNumber>
    </recommendedName>
</protein>
<name>LGT_SHOC1</name>
<accession>Q5WDH2</accession>
<reference key="1">
    <citation type="submission" date="2003-10" db="EMBL/GenBank/DDBJ databases">
        <title>The complete genome sequence of the alkaliphilic Bacillus clausii KSM-K16.</title>
        <authorList>
            <person name="Takaki Y."/>
            <person name="Kageyama Y."/>
            <person name="Shimamura S."/>
            <person name="Suzuki H."/>
            <person name="Nishi S."/>
            <person name="Hatada Y."/>
            <person name="Kawai S."/>
            <person name="Ito S."/>
            <person name="Horikoshi K."/>
        </authorList>
    </citation>
    <scope>NUCLEOTIDE SEQUENCE [LARGE SCALE GENOMIC DNA]</scope>
    <source>
        <strain>KSM-K16</strain>
    </source>
</reference>